<sequence>MYSIKMRSSNQDVHISGAETICEFDKIEQTVQRFYNKGFFHENGQPDFLNIKIQKIMEPIQQIKALQIIEDDKANLQHLTQECGVTEQALNQGMTYIKNETVYTGAIILSAISGKRLDSFGQRGIRATHFSFEDINNKGDLNERVTDALAIASCINAHPYVKGELCVSDDLTYTTGYFAAAKIGYHRLFDIKPVNTRYGGRIIFVDDCIDLNHYISFLESTPKQVVYETV</sequence>
<proteinExistence type="inferred from homology"/>
<organism>
    <name type="scientific">Staphylococcus aureus (strain NCTC 8325 / PS 47)</name>
    <dbReference type="NCBI Taxonomy" id="93061"/>
    <lineage>
        <taxon>Bacteria</taxon>
        <taxon>Bacillati</taxon>
        <taxon>Bacillota</taxon>
        <taxon>Bacilli</taxon>
        <taxon>Bacillales</taxon>
        <taxon>Staphylococcaceae</taxon>
        <taxon>Staphylococcus</taxon>
    </lineage>
</organism>
<name>BIOW_STAA8</name>
<reference key="1">
    <citation type="book" date="2006" name="Gram positive pathogens, 2nd edition">
        <title>The Staphylococcus aureus NCTC 8325 genome.</title>
        <editorList>
            <person name="Fischetti V."/>
            <person name="Novick R."/>
            <person name="Ferretti J."/>
            <person name="Portnoy D."/>
            <person name="Rood J."/>
        </editorList>
        <authorList>
            <person name="Gillaspy A.F."/>
            <person name="Worrell V."/>
            <person name="Orvis J."/>
            <person name="Roe B.A."/>
            <person name="Dyer D.W."/>
            <person name="Iandolo J.J."/>
        </authorList>
    </citation>
    <scope>NUCLEOTIDE SEQUENCE [LARGE SCALE GENOMIC DNA]</scope>
    <source>
        <strain>NCTC 8325 / PS 47</strain>
    </source>
</reference>
<accession>Q2FVJ9</accession>
<gene>
    <name evidence="1" type="primary">bioW</name>
    <name type="ordered locus">SAOUHSC_02712</name>
</gene>
<feature type="chain" id="PRO_1000044697" description="6-carboxyhexanoate--CoA ligase">
    <location>
        <begin position="1"/>
        <end position="230"/>
    </location>
</feature>
<protein>
    <recommendedName>
        <fullName evidence="1">6-carboxyhexanoate--CoA ligase</fullName>
        <ecNumber evidence="1">6.2.1.14</ecNumber>
    </recommendedName>
    <alternativeName>
        <fullName evidence="1">Pimeloyl-CoA synthase</fullName>
    </alternativeName>
</protein>
<evidence type="ECO:0000255" key="1">
    <source>
        <dbReference type="HAMAP-Rule" id="MF_00668"/>
    </source>
</evidence>
<dbReference type="EC" id="6.2.1.14" evidence="1"/>
<dbReference type="EMBL" id="CP000253">
    <property type="protein sequence ID" value="ABD31720.1"/>
    <property type="molecule type" value="Genomic_DNA"/>
</dbReference>
<dbReference type="RefSeq" id="WP_000286875.1">
    <property type="nucleotide sequence ID" value="NZ_LS483365.1"/>
</dbReference>
<dbReference type="RefSeq" id="YP_501174.1">
    <property type="nucleotide sequence ID" value="NC_007795.1"/>
</dbReference>
<dbReference type="SMR" id="Q2FVJ9"/>
<dbReference type="STRING" id="93061.SAOUHSC_02712"/>
<dbReference type="PaxDb" id="1280-SAXN108_2679"/>
<dbReference type="GeneID" id="3919731"/>
<dbReference type="KEGG" id="sao:SAOUHSC_02712"/>
<dbReference type="PATRIC" id="fig|93061.5.peg.2456"/>
<dbReference type="eggNOG" id="COG1424">
    <property type="taxonomic scope" value="Bacteria"/>
</dbReference>
<dbReference type="HOGENOM" id="CLU_076858_0_0_9"/>
<dbReference type="OrthoDB" id="9792985at2"/>
<dbReference type="UniPathway" id="UPA00999">
    <property type="reaction ID" value="UER00351"/>
</dbReference>
<dbReference type="PRO" id="PR:Q2FVJ9"/>
<dbReference type="Proteomes" id="UP000008816">
    <property type="component" value="Chromosome"/>
</dbReference>
<dbReference type="GO" id="GO:0042410">
    <property type="term" value="F:6-carboxyhexanoate-CoA ligase activity"/>
    <property type="evidence" value="ECO:0007669"/>
    <property type="project" value="UniProtKB-UniRule"/>
</dbReference>
<dbReference type="GO" id="GO:0005524">
    <property type="term" value="F:ATP binding"/>
    <property type="evidence" value="ECO:0007669"/>
    <property type="project" value="UniProtKB-KW"/>
</dbReference>
<dbReference type="GO" id="GO:0000287">
    <property type="term" value="F:magnesium ion binding"/>
    <property type="evidence" value="ECO:0007669"/>
    <property type="project" value="UniProtKB-UniRule"/>
</dbReference>
<dbReference type="GO" id="GO:0009102">
    <property type="term" value="P:biotin biosynthetic process"/>
    <property type="evidence" value="ECO:0007669"/>
    <property type="project" value="UniProtKB-UniRule"/>
</dbReference>
<dbReference type="HAMAP" id="MF_00668">
    <property type="entry name" value="BioW"/>
    <property type="match status" value="1"/>
</dbReference>
<dbReference type="InterPro" id="IPR005499">
    <property type="entry name" value="BioW"/>
</dbReference>
<dbReference type="NCBIfam" id="NF002360">
    <property type="entry name" value="PRK01322.1"/>
    <property type="match status" value="1"/>
</dbReference>
<dbReference type="Pfam" id="PF03744">
    <property type="entry name" value="BioW"/>
    <property type="match status" value="1"/>
</dbReference>
<comment type="function">
    <text evidence="1">Catalyzes the transformation of pimelate into pimeloyl-CoA with concomitant hydrolysis of ATP to AMP.</text>
</comment>
<comment type="catalytic activity">
    <reaction evidence="1">
        <text>heptanedioate + ATP + CoA = 6-carboxyhexanoyl-CoA + AMP + diphosphate</text>
        <dbReference type="Rhea" id="RHEA:14781"/>
        <dbReference type="ChEBI" id="CHEBI:30616"/>
        <dbReference type="ChEBI" id="CHEBI:33019"/>
        <dbReference type="ChEBI" id="CHEBI:36165"/>
        <dbReference type="ChEBI" id="CHEBI:57287"/>
        <dbReference type="ChEBI" id="CHEBI:57360"/>
        <dbReference type="ChEBI" id="CHEBI:456215"/>
        <dbReference type="EC" id="6.2.1.14"/>
    </reaction>
</comment>
<comment type="cofactor">
    <cofactor evidence="1">
        <name>Mg(2+)</name>
        <dbReference type="ChEBI" id="CHEBI:18420"/>
    </cofactor>
</comment>
<comment type="pathway">
    <text evidence="1">Metabolic intermediate metabolism; pimeloyl-CoA biosynthesis; pimeloyl-CoA from pimelate: step 1/1.</text>
</comment>
<comment type="subunit">
    <text evidence="1">Homodimer.</text>
</comment>
<comment type="similarity">
    <text evidence="1">Belongs to the BioW family.</text>
</comment>
<keyword id="KW-0067">ATP-binding</keyword>
<keyword id="KW-0093">Biotin biosynthesis</keyword>
<keyword id="KW-0436">Ligase</keyword>
<keyword id="KW-0460">Magnesium</keyword>
<keyword id="KW-0547">Nucleotide-binding</keyword>
<keyword id="KW-1185">Reference proteome</keyword>